<evidence type="ECO:0000255" key="1">
    <source>
        <dbReference type="HAMAP-Rule" id="MF_00637"/>
    </source>
</evidence>
<name>SP2AB_BACC7</name>
<proteinExistence type="inferred from homology"/>
<protein>
    <recommendedName>
        <fullName evidence="1">Anti-sigma F factor</fullName>
        <ecNumber evidence="1">2.7.11.1</ecNumber>
    </recommendedName>
    <alternativeName>
        <fullName evidence="1">Stage II sporulation protein AB</fullName>
    </alternativeName>
</protein>
<sequence>MRNEMNLQFSALSQNESFARVTVAAFIAQLDPTMEELTEIKTVVSEAVTNAIIHGYEGNAEGVVYISVILEEAMVKLTIRDEGIGIFNLDEARQPLFTTKPELERSGMGFTIMENFMDEVEVISNESFGTTIHLTKYLSNSNALCN</sequence>
<organism>
    <name type="scientific">Bacillus cereus (strain AH187)</name>
    <dbReference type="NCBI Taxonomy" id="405534"/>
    <lineage>
        <taxon>Bacteria</taxon>
        <taxon>Bacillati</taxon>
        <taxon>Bacillota</taxon>
        <taxon>Bacilli</taxon>
        <taxon>Bacillales</taxon>
        <taxon>Bacillaceae</taxon>
        <taxon>Bacillus</taxon>
        <taxon>Bacillus cereus group</taxon>
    </lineage>
</organism>
<dbReference type="EC" id="2.7.11.1" evidence="1"/>
<dbReference type="EMBL" id="CP001177">
    <property type="protein sequence ID" value="ACJ81490.1"/>
    <property type="molecule type" value="Genomic_DNA"/>
</dbReference>
<dbReference type="SMR" id="B7HN53"/>
<dbReference type="KEGG" id="bcr:BCAH187_A4206"/>
<dbReference type="HOGENOM" id="CLU_090336_11_0_9"/>
<dbReference type="Proteomes" id="UP000002214">
    <property type="component" value="Chromosome"/>
</dbReference>
<dbReference type="GO" id="GO:0005524">
    <property type="term" value="F:ATP binding"/>
    <property type="evidence" value="ECO:0007669"/>
    <property type="project" value="UniProtKB-KW"/>
</dbReference>
<dbReference type="GO" id="GO:0106310">
    <property type="term" value="F:protein serine kinase activity"/>
    <property type="evidence" value="ECO:0007669"/>
    <property type="project" value="RHEA"/>
</dbReference>
<dbReference type="GO" id="GO:0004674">
    <property type="term" value="F:protein serine/threonine kinase activity"/>
    <property type="evidence" value="ECO:0007669"/>
    <property type="project" value="UniProtKB-KW"/>
</dbReference>
<dbReference type="GO" id="GO:0016989">
    <property type="term" value="F:sigma factor antagonist activity"/>
    <property type="evidence" value="ECO:0007669"/>
    <property type="project" value="InterPro"/>
</dbReference>
<dbReference type="GO" id="GO:0030436">
    <property type="term" value="P:asexual sporulation"/>
    <property type="evidence" value="ECO:0007669"/>
    <property type="project" value="UniProtKB-UniRule"/>
</dbReference>
<dbReference type="GO" id="GO:0042174">
    <property type="term" value="P:negative regulation of sporulation resulting in formation of a cellular spore"/>
    <property type="evidence" value="ECO:0007669"/>
    <property type="project" value="InterPro"/>
</dbReference>
<dbReference type="GO" id="GO:0030435">
    <property type="term" value="P:sporulation resulting in formation of a cellular spore"/>
    <property type="evidence" value="ECO:0007669"/>
    <property type="project" value="UniProtKB-KW"/>
</dbReference>
<dbReference type="FunFam" id="3.30.565.10:FF:000022">
    <property type="entry name" value="Anti-sigma F factor"/>
    <property type="match status" value="1"/>
</dbReference>
<dbReference type="Gene3D" id="3.30.565.10">
    <property type="entry name" value="Histidine kinase-like ATPase, C-terminal domain"/>
    <property type="match status" value="1"/>
</dbReference>
<dbReference type="HAMAP" id="MF_00637">
    <property type="entry name" value="Anti_sigma_F"/>
    <property type="match status" value="1"/>
</dbReference>
<dbReference type="InterPro" id="IPR050267">
    <property type="entry name" value="Anti-sigma-factor_SerPK"/>
</dbReference>
<dbReference type="InterPro" id="IPR010194">
    <property type="entry name" value="Anti-sigma_F"/>
</dbReference>
<dbReference type="InterPro" id="IPR036890">
    <property type="entry name" value="HATPase_C_sf"/>
</dbReference>
<dbReference type="NCBIfam" id="TIGR01925">
    <property type="entry name" value="spIIAB"/>
    <property type="match status" value="1"/>
</dbReference>
<dbReference type="PANTHER" id="PTHR35526:SF3">
    <property type="entry name" value="ANTI-SIGMA-F FACTOR RSBW"/>
    <property type="match status" value="1"/>
</dbReference>
<dbReference type="PANTHER" id="PTHR35526">
    <property type="entry name" value="ANTI-SIGMA-F FACTOR RSBW-RELATED"/>
    <property type="match status" value="1"/>
</dbReference>
<dbReference type="Pfam" id="PF13581">
    <property type="entry name" value="HATPase_c_2"/>
    <property type="match status" value="1"/>
</dbReference>
<dbReference type="SMART" id="SM00387">
    <property type="entry name" value="HATPase_c"/>
    <property type="match status" value="1"/>
</dbReference>
<dbReference type="SUPFAM" id="SSF55874">
    <property type="entry name" value="ATPase domain of HSP90 chaperone/DNA topoisomerase II/histidine kinase"/>
    <property type="match status" value="1"/>
</dbReference>
<feature type="chain" id="PRO_1000130805" description="Anti-sigma F factor">
    <location>
        <begin position="1"/>
        <end position="146"/>
    </location>
</feature>
<gene>
    <name evidence="1" type="primary">spoIIAB</name>
    <name type="ordered locus">BCAH187_A4206</name>
</gene>
<accession>B7HN53</accession>
<comment type="function">
    <text evidence="1">Binds to sigma F and blocks its ability to form an RNA polymerase holoenzyme (E-sigma F). Phosphorylates SpoIIAA on a serine residue. This phosphorylation may enable SpoIIAA to act as an anti-anti-sigma factor that counteracts SpoIIAB and thus releases sigma F from inhibition.</text>
</comment>
<comment type="catalytic activity">
    <reaction evidence="1">
        <text>L-seryl-[protein] + ATP = O-phospho-L-seryl-[protein] + ADP + H(+)</text>
        <dbReference type="Rhea" id="RHEA:17989"/>
        <dbReference type="Rhea" id="RHEA-COMP:9863"/>
        <dbReference type="Rhea" id="RHEA-COMP:11604"/>
        <dbReference type="ChEBI" id="CHEBI:15378"/>
        <dbReference type="ChEBI" id="CHEBI:29999"/>
        <dbReference type="ChEBI" id="CHEBI:30616"/>
        <dbReference type="ChEBI" id="CHEBI:83421"/>
        <dbReference type="ChEBI" id="CHEBI:456216"/>
        <dbReference type="EC" id="2.7.11.1"/>
    </reaction>
</comment>
<comment type="catalytic activity">
    <reaction evidence="1">
        <text>L-threonyl-[protein] + ATP = O-phospho-L-threonyl-[protein] + ADP + H(+)</text>
        <dbReference type="Rhea" id="RHEA:46608"/>
        <dbReference type="Rhea" id="RHEA-COMP:11060"/>
        <dbReference type="Rhea" id="RHEA-COMP:11605"/>
        <dbReference type="ChEBI" id="CHEBI:15378"/>
        <dbReference type="ChEBI" id="CHEBI:30013"/>
        <dbReference type="ChEBI" id="CHEBI:30616"/>
        <dbReference type="ChEBI" id="CHEBI:61977"/>
        <dbReference type="ChEBI" id="CHEBI:456216"/>
        <dbReference type="EC" id="2.7.11.1"/>
    </reaction>
</comment>
<comment type="similarity">
    <text evidence="1">Belongs to the anti-sigma-factor family.</text>
</comment>
<keyword id="KW-0067">ATP-binding</keyword>
<keyword id="KW-0418">Kinase</keyword>
<keyword id="KW-0547">Nucleotide-binding</keyword>
<keyword id="KW-0723">Serine/threonine-protein kinase</keyword>
<keyword id="KW-0749">Sporulation</keyword>
<keyword id="KW-0808">Transferase</keyword>
<reference key="1">
    <citation type="submission" date="2008-10" db="EMBL/GenBank/DDBJ databases">
        <title>Genome sequence of Bacillus cereus AH187.</title>
        <authorList>
            <person name="Dodson R.J."/>
            <person name="Durkin A.S."/>
            <person name="Rosovitz M.J."/>
            <person name="Rasko D.A."/>
            <person name="Kolsto A.B."/>
            <person name="Okstad O.A."/>
            <person name="Ravel J."/>
            <person name="Sutton G."/>
        </authorList>
    </citation>
    <scope>NUCLEOTIDE SEQUENCE [LARGE SCALE GENOMIC DNA]</scope>
    <source>
        <strain>AH187</strain>
    </source>
</reference>